<comment type="function">
    <text evidence="1">Probably involved in the RNA silencing pathway. May bind to short RNAs such as microRNAs (miRNAs) or short interfering RNAs (siRNAs), and represses the translation of mRNAs which are complementary to them (By similarity).</text>
</comment>
<comment type="similarity">
    <text evidence="5">Belongs to the argonaute family. Ago subfamily.</text>
</comment>
<comment type="sequence caution" evidence="5">
    <conflict type="erroneous gene model prediction">
        <sequence resource="EMBL-CDS" id="AAP68388"/>
    </conflict>
</comment>
<comment type="sequence caution" evidence="5">
    <conflict type="erroneous gene model prediction">
        <sequence resource="EMBL-CDS" id="ABF98226"/>
    </conflict>
</comment>
<comment type="sequence caution" evidence="5">
    <conflict type="erroneous gene model prediction">
        <sequence resource="EMBL-CDS" id="BAF12825"/>
    </conflict>
</comment>
<proteinExistence type="evidence at transcript level"/>
<accession>Q10F39</accession>
<accession>Q7XZZ9</accession>
<evidence type="ECO:0000250" key="1"/>
<evidence type="ECO:0000255" key="2">
    <source>
        <dbReference type="PROSITE-ProRule" id="PRU00142"/>
    </source>
</evidence>
<evidence type="ECO:0000255" key="3">
    <source>
        <dbReference type="PROSITE-ProRule" id="PRU00150"/>
    </source>
</evidence>
<evidence type="ECO:0000256" key="4">
    <source>
        <dbReference type="SAM" id="MobiDB-lite"/>
    </source>
</evidence>
<evidence type="ECO:0000305" key="5"/>
<feature type="chain" id="PRO_0000378434" description="Protein argonaute 11">
    <location>
        <begin position="1"/>
        <end position="892"/>
    </location>
</feature>
<feature type="domain" description="PAZ" evidence="2">
    <location>
        <begin position="248"/>
        <end position="362"/>
    </location>
</feature>
<feature type="domain" description="Piwi" evidence="3">
    <location>
        <begin position="541"/>
        <end position="848"/>
    </location>
</feature>
<feature type="region of interest" description="Disordered" evidence="4">
    <location>
        <begin position="1"/>
        <end position="68"/>
    </location>
</feature>
<feature type="region of interest" description="Disordered" evidence="4">
    <location>
        <begin position="86"/>
        <end position="117"/>
    </location>
</feature>
<feature type="region of interest" description="Disordered" evidence="4">
    <location>
        <begin position="850"/>
        <end position="876"/>
    </location>
</feature>
<feature type="compositionally biased region" description="Gly residues" evidence="4">
    <location>
        <begin position="1"/>
        <end position="17"/>
    </location>
</feature>
<feature type="compositionally biased region" description="Low complexity" evidence="4">
    <location>
        <begin position="86"/>
        <end position="107"/>
    </location>
</feature>
<feature type="compositionally biased region" description="Low complexity" evidence="4">
    <location>
        <begin position="856"/>
        <end position="866"/>
    </location>
</feature>
<feature type="compositionally biased region" description="Basic and acidic residues" evidence="4">
    <location>
        <begin position="867"/>
        <end position="876"/>
    </location>
</feature>
<dbReference type="EMBL" id="AC087412">
    <property type="protein sequence ID" value="AAP68388.1"/>
    <property type="status" value="ALT_SEQ"/>
    <property type="molecule type" value="Genomic_DNA"/>
</dbReference>
<dbReference type="EMBL" id="DP000009">
    <property type="protein sequence ID" value="ABF98226.1"/>
    <property type="status" value="ALT_SEQ"/>
    <property type="molecule type" value="Genomic_DNA"/>
</dbReference>
<dbReference type="EMBL" id="AP008209">
    <property type="protein sequence ID" value="BAF12825.2"/>
    <property type="status" value="ALT_SEQ"/>
    <property type="molecule type" value="Genomic_DNA"/>
</dbReference>
<dbReference type="EMBL" id="AP014959">
    <property type="status" value="NOT_ANNOTATED_CDS"/>
    <property type="molecule type" value="Genomic_DNA"/>
</dbReference>
<dbReference type="SMR" id="Q10F39"/>
<dbReference type="FunCoup" id="Q10F39">
    <property type="interactions" value="1794"/>
</dbReference>
<dbReference type="STRING" id="39947.Q10F39"/>
<dbReference type="PaxDb" id="39947-Q10F39"/>
<dbReference type="KEGG" id="dosa:Os03g0682600"/>
<dbReference type="eggNOG" id="KOG1041">
    <property type="taxonomic scope" value="Eukaryota"/>
</dbReference>
<dbReference type="HOGENOM" id="CLU_004544_4_3_1"/>
<dbReference type="InParanoid" id="Q10F39"/>
<dbReference type="Proteomes" id="UP000000763">
    <property type="component" value="Chromosome 3"/>
</dbReference>
<dbReference type="Proteomes" id="UP000059680">
    <property type="component" value="Chromosome 3"/>
</dbReference>
<dbReference type="GO" id="GO:0005737">
    <property type="term" value="C:cytoplasm"/>
    <property type="evidence" value="ECO:0000318"/>
    <property type="project" value="GO_Central"/>
</dbReference>
<dbReference type="GO" id="GO:0005634">
    <property type="term" value="C:nucleus"/>
    <property type="evidence" value="ECO:0000318"/>
    <property type="project" value="GO_Central"/>
</dbReference>
<dbReference type="GO" id="GO:0003723">
    <property type="term" value="F:RNA binding"/>
    <property type="evidence" value="ECO:0000318"/>
    <property type="project" value="GO_Central"/>
</dbReference>
<dbReference type="GO" id="GO:0004521">
    <property type="term" value="F:RNA endonuclease activity"/>
    <property type="evidence" value="ECO:0000318"/>
    <property type="project" value="GO_Central"/>
</dbReference>
<dbReference type="GO" id="GO:0031047">
    <property type="term" value="P:regulatory ncRNA-mediated gene silencing"/>
    <property type="evidence" value="ECO:0000318"/>
    <property type="project" value="GO_Central"/>
</dbReference>
<dbReference type="CDD" id="cd02846">
    <property type="entry name" value="PAZ_argonaute_like"/>
    <property type="match status" value="1"/>
</dbReference>
<dbReference type="CDD" id="cd04657">
    <property type="entry name" value="Piwi_ago-like"/>
    <property type="match status" value="1"/>
</dbReference>
<dbReference type="FunFam" id="3.30.420.10:FF:000013">
    <property type="entry name" value="protein argonaute 10-like"/>
    <property type="match status" value="1"/>
</dbReference>
<dbReference type="Gene3D" id="3.40.50.2300">
    <property type="match status" value="1"/>
</dbReference>
<dbReference type="Gene3D" id="2.170.260.10">
    <property type="entry name" value="paz domain"/>
    <property type="match status" value="1"/>
</dbReference>
<dbReference type="Gene3D" id="3.30.420.10">
    <property type="entry name" value="Ribonuclease H-like superfamily/Ribonuclease H"/>
    <property type="match status" value="1"/>
</dbReference>
<dbReference type="InterPro" id="IPR032472">
    <property type="entry name" value="ArgoL2"/>
</dbReference>
<dbReference type="InterPro" id="IPR032473">
    <property type="entry name" value="Argonaute_Mid_dom"/>
</dbReference>
<dbReference type="InterPro" id="IPR032474">
    <property type="entry name" value="Argonaute_N"/>
</dbReference>
<dbReference type="InterPro" id="IPR003100">
    <property type="entry name" value="PAZ_dom"/>
</dbReference>
<dbReference type="InterPro" id="IPR036085">
    <property type="entry name" value="PAZ_dom_sf"/>
</dbReference>
<dbReference type="InterPro" id="IPR003165">
    <property type="entry name" value="Piwi"/>
</dbReference>
<dbReference type="InterPro" id="IPR045246">
    <property type="entry name" value="Piwi_ago-like"/>
</dbReference>
<dbReference type="InterPro" id="IPR012337">
    <property type="entry name" value="RNaseH-like_sf"/>
</dbReference>
<dbReference type="InterPro" id="IPR036397">
    <property type="entry name" value="RNaseH_sf"/>
</dbReference>
<dbReference type="PANTHER" id="PTHR22891">
    <property type="entry name" value="EUKARYOTIC TRANSLATION INITIATION FACTOR 2C"/>
    <property type="match status" value="1"/>
</dbReference>
<dbReference type="Pfam" id="PF16488">
    <property type="entry name" value="ArgoL2"/>
    <property type="match status" value="1"/>
</dbReference>
<dbReference type="Pfam" id="PF16487">
    <property type="entry name" value="ArgoMid"/>
    <property type="match status" value="1"/>
</dbReference>
<dbReference type="Pfam" id="PF16486">
    <property type="entry name" value="ArgoN"/>
    <property type="match status" value="1"/>
</dbReference>
<dbReference type="Pfam" id="PF02170">
    <property type="entry name" value="PAZ"/>
    <property type="match status" value="1"/>
</dbReference>
<dbReference type="Pfam" id="PF02171">
    <property type="entry name" value="Piwi"/>
    <property type="match status" value="1"/>
</dbReference>
<dbReference type="SMART" id="SM00950">
    <property type="entry name" value="Piwi"/>
    <property type="match status" value="1"/>
</dbReference>
<dbReference type="SUPFAM" id="SSF101690">
    <property type="entry name" value="PAZ domain"/>
    <property type="match status" value="1"/>
</dbReference>
<dbReference type="SUPFAM" id="SSF53098">
    <property type="entry name" value="Ribonuclease H-like"/>
    <property type="match status" value="1"/>
</dbReference>
<dbReference type="PROSITE" id="PS50821">
    <property type="entry name" value="PAZ"/>
    <property type="match status" value="1"/>
</dbReference>
<dbReference type="PROSITE" id="PS50822">
    <property type="entry name" value="PIWI"/>
    <property type="match status" value="1"/>
</dbReference>
<reference key="1">
    <citation type="journal article" date="2005" name="Genome Res.">
        <title>Sequence, annotation, and analysis of synteny between rice chromosome 3 and diverged grass species.</title>
        <authorList>
            <consortium name="The rice chromosome 3 sequencing consortium"/>
            <person name="Buell C.R."/>
            <person name="Yuan Q."/>
            <person name="Ouyang S."/>
            <person name="Liu J."/>
            <person name="Zhu W."/>
            <person name="Wang A."/>
            <person name="Maiti R."/>
            <person name="Haas B."/>
            <person name="Wortman J."/>
            <person name="Pertea M."/>
            <person name="Jones K.M."/>
            <person name="Kim M."/>
            <person name="Overton L."/>
            <person name="Tsitrin T."/>
            <person name="Fadrosh D."/>
            <person name="Bera J."/>
            <person name="Weaver B."/>
            <person name="Jin S."/>
            <person name="Johri S."/>
            <person name="Reardon M."/>
            <person name="Webb K."/>
            <person name="Hill J."/>
            <person name="Moffat K."/>
            <person name="Tallon L."/>
            <person name="Van Aken S."/>
            <person name="Lewis M."/>
            <person name="Utterback T."/>
            <person name="Feldblyum T."/>
            <person name="Zismann V."/>
            <person name="Iobst S."/>
            <person name="Hsiao J."/>
            <person name="de Vazeille A.R."/>
            <person name="Salzberg S.L."/>
            <person name="White O."/>
            <person name="Fraser C.M."/>
            <person name="Yu Y."/>
            <person name="Kim H."/>
            <person name="Rambo T."/>
            <person name="Currie J."/>
            <person name="Collura K."/>
            <person name="Kernodle-Thompson S."/>
            <person name="Wei F."/>
            <person name="Kudrna K."/>
            <person name="Ammiraju J.S.S."/>
            <person name="Luo M."/>
            <person name="Goicoechea J.L."/>
            <person name="Wing R.A."/>
            <person name="Henry D."/>
            <person name="Oates R."/>
            <person name="Palmer M."/>
            <person name="Pries G."/>
            <person name="Saski C."/>
            <person name="Simmons J."/>
            <person name="Soderlund C."/>
            <person name="Nelson W."/>
            <person name="de la Bastide M."/>
            <person name="Spiegel L."/>
            <person name="Nascimento L."/>
            <person name="Huang E."/>
            <person name="Preston R."/>
            <person name="Zutavern T."/>
            <person name="Palmer L."/>
            <person name="O'Shaughnessy A."/>
            <person name="Dike S."/>
            <person name="McCombie W.R."/>
            <person name="Minx P."/>
            <person name="Cordum H."/>
            <person name="Wilson R."/>
            <person name="Jin W."/>
            <person name="Lee H.R."/>
            <person name="Jiang J."/>
            <person name="Jackson S."/>
        </authorList>
    </citation>
    <scope>NUCLEOTIDE SEQUENCE [LARGE SCALE GENOMIC DNA]</scope>
    <source>
        <strain>cv. Nipponbare</strain>
    </source>
</reference>
<reference key="2">
    <citation type="journal article" date="2005" name="Nature">
        <title>The map-based sequence of the rice genome.</title>
        <authorList>
            <consortium name="International rice genome sequencing project (IRGSP)"/>
        </authorList>
    </citation>
    <scope>NUCLEOTIDE SEQUENCE [LARGE SCALE GENOMIC DNA]</scope>
    <source>
        <strain>cv. Nipponbare</strain>
    </source>
</reference>
<reference key="3">
    <citation type="journal article" date="2008" name="Nucleic Acids Res.">
        <title>The rice annotation project database (RAP-DB): 2008 update.</title>
        <authorList>
            <consortium name="The rice annotation project (RAP)"/>
        </authorList>
    </citation>
    <scope>GENOME REANNOTATION</scope>
    <source>
        <strain>cv. Nipponbare</strain>
    </source>
</reference>
<reference key="4">
    <citation type="journal article" date="2013" name="Rice">
        <title>Improvement of the Oryza sativa Nipponbare reference genome using next generation sequence and optical map data.</title>
        <authorList>
            <person name="Kawahara Y."/>
            <person name="de la Bastide M."/>
            <person name="Hamilton J.P."/>
            <person name="Kanamori H."/>
            <person name="McCombie W.R."/>
            <person name="Ouyang S."/>
            <person name="Schwartz D.C."/>
            <person name="Tanaka T."/>
            <person name="Wu J."/>
            <person name="Zhou S."/>
            <person name="Childs K.L."/>
            <person name="Davidson R.M."/>
            <person name="Lin H."/>
            <person name="Quesada-Ocampo L."/>
            <person name="Vaillancourt B."/>
            <person name="Sakai H."/>
            <person name="Lee S.S."/>
            <person name="Kim J."/>
            <person name="Numa H."/>
            <person name="Itoh T."/>
            <person name="Buell C.R."/>
            <person name="Matsumoto T."/>
        </authorList>
    </citation>
    <scope>GENOME REANNOTATION</scope>
    <source>
        <strain>cv. Nipponbare</strain>
    </source>
</reference>
<reference key="5">
    <citation type="journal article" date="2008" name="BMC Genomics">
        <title>Genome-wide identification, organization and phylogenetic analysis of dicer-like, argonaute and RNA-dependent RNA polymerase gene families and their expression analysis during reproductive development and stress in rice.</title>
        <authorList>
            <person name="Kapoor M."/>
            <person name="Arora R."/>
            <person name="Lama T."/>
            <person name="Nijhawan A."/>
            <person name="Khurana J.P."/>
            <person name="Tyagi A.K."/>
            <person name="Kapoor S."/>
        </authorList>
    </citation>
    <scope>GENE FAMILY</scope>
    <scope>NOMENCLATURE</scope>
</reference>
<organism>
    <name type="scientific">Oryza sativa subsp. japonica</name>
    <name type="common">Rice</name>
    <dbReference type="NCBI Taxonomy" id="39947"/>
    <lineage>
        <taxon>Eukaryota</taxon>
        <taxon>Viridiplantae</taxon>
        <taxon>Streptophyta</taxon>
        <taxon>Embryophyta</taxon>
        <taxon>Tracheophyta</taxon>
        <taxon>Spermatophyta</taxon>
        <taxon>Magnoliopsida</taxon>
        <taxon>Liliopsida</taxon>
        <taxon>Poales</taxon>
        <taxon>Poaceae</taxon>
        <taxon>BOP clade</taxon>
        <taxon>Oryzoideae</taxon>
        <taxon>Oryzeae</taxon>
        <taxon>Oryzinae</taxon>
        <taxon>Oryza</taxon>
        <taxon>Oryza sativa</taxon>
    </lineage>
</organism>
<protein>
    <recommendedName>
        <fullName>Protein argonaute 11</fullName>
        <shortName>OsAGO11</shortName>
    </recommendedName>
</protein>
<sequence length="892" mass="98774">MSSRGGGVGGRRGGPGGASSVRGGERGRKRGRGALDAVEPRVPLPRGTGSGPGAGRDGAAAPVPALQPAEADVLSGEVETEMAAGMEAREGASSSSSASAPAVGEVEPPSRAVGALPPTSSKAVVLQARPGFGTVGTSCRVRANHFVVQLADKEIYHYDVAIAPELRSRERNRNIINELLRSHKKYLDGRRSPAYDGRKGMFTAGALPFTDREFVVKIANDPERGNQGEKEFKVTIKCAGAANLYMHSLKQFLAGTYPSQDRFSHKHLDIRILIVALNGGEDISATTFYKAQPVIDFALDYLNMNIRDAYSRFDQDGTRVSVVQYFNRQYSYSLKYINWPCLQAGSDSRPTYLPMEVCRIVKGQRYSRKLNECQVTRMLRLARETPEERENSILEIANENNYGNDYHAREFGIGVTNQLALVDARVLPAPMLKYHDSGQEKVCNPSIGQWNMNNKRMLNGGSINYWACLTFASCVRLAEVRTFCKELVRVCNSIGMQITGEPCVRIRQERQDHLDAAVRDIHRQSAEFLSQQGVIGQQLELLVIVLPDANATVFYGRIKRLCETELGVITQCCLARNVQNVGGRNTVLEDALHRRIPLLTDMPTMIFGADVTHPPAGEDSSPSIAAVVASMDWPEVSKYKCSVSSQSHREEIIADLFTEVKDSQNRLVYGGMIRELIESFRKANGSYKPGRIIFYRDGVSEGQFSQVLLSEMDAIRKACASIEEGYLPPVTFVVVQKRHHTRLFPEDHHARDQMDRSRNILPGTVVDTKICHPSEFDFYLCSHSGIQGTSHPTHYYVLFDENNFSADALQTLTYHLCYTYARCTRSVSIVPPVYYAHLAASRARHYLEEGSLPDHGSSSASAAGGSRRNDRGVPVKPLPEIKENVKQFMFYC</sequence>
<gene>
    <name type="primary">AGO11</name>
    <name type="ordered locus">Os03g0682600</name>
    <name type="ordered locus">LOC_Os03g47830</name>
    <name type="ORF">OSJNBb0070O09.7</name>
</gene>
<keyword id="KW-1185">Reference proteome</keyword>
<keyword id="KW-0943">RNA-mediated gene silencing</keyword>
<name>AGO11_ORYSJ</name>